<keyword id="KW-0929">Antimicrobial</keyword>
<keyword id="KW-0081">Bacteriolytic enzyme</keyword>
<keyword id="KW-0204">Cytolysis</keyword>
<keyword id="KW-1015">Disulfide bond</keyword>
<keyword id="KW-0326">Glycosidase</keyword>
<keyword id="KW-1030">Host cell inner membrane</keyword>
<keyword id="KW-0578">Host cell lysis by virus</keyword>
<keyword id="KW-1032">Host cell membrane</keyword>
<keyword id="KW-1043">Host membrane</keyword>
<keyword id="KW-0378">Hydrolase</keyword>
<keyword id="KW-0472">Membrane</keyword>
<keyword id="KW-1185">Reference proteome</keyword>
<keyword id="KW-0735">Signal-anchor</keyword>
<keyword id="KW-0812">Transmembrane</keyword>
<keyword id="KW-1133">Transmembrane helix</keyword>
<keyword id="KW-1188">Viral release from host cell</keyword>
<feature type="chain" id="PRO_0000018519" description="SAR-endolysin">
    <location>
        <begin position="1"/>
        <end position="186"/>
    </location>
</feature>
<feature type="transmembrane region" description="Helical; Signal-anchor for type II membrane protein" evidence="2">
    <location>
        <begin position="1"/>
        <end position="18"/>
    </location>
</feature>
<feature type="active site" description="Proton donor/acceptor" evidence="3">
    <location>
        <position position="47"/>
    </location>
</feature>
<feature type="active site" description="Proton donor/acceptor" evidence="3">
    <location>
        <position position="56"/>
    </location>
</feature>
<feature type="disulfide bond" description="In the active soluble endolysin" evidence="1">
    <location>
        <begin position="11"/>
        <end position="49"/>
    </location>
</feature>
<feature type="disulfide bond" description="In the inactive membrane-associated endolysin" evidence="1">
    <location>
        <begin position="49"/>
        <end position="56"/>
    </location>
</feature>
<sequence>MSKKFGAMILCSAAAVAAAFFAQQKGLPTQQQNQVSPKAVSMIVNLEGCVRNPYKCPADVWTNGVGNTHNVDKTKILTIDEVATDLRRNIKEAENCINTYFNGEKMNQGQYDAMVSLAFNVGCGNIKTYYSKTQGKRVATTIYRAAQAENWILMCNRIEDFNKSGGRVLKGLQNRRAKEKALCLGE</sequence>
<accession>P51728</accession>
<comment type="function">
    <text evidence="3">Signal-arrest-release (SAR) endolysin with lysozyme activity that degrades host peptidoglycans and participates with the pinholin and spanin proteins in the sequential events which lead to programmed host cell lysis releasing the mature viral particles. Once the pinholin has permeabilized the host cell membrane, the SAR-endolysin is released into the periplasm where it breaks down the peptidoglycan layer.</text>
</comment>
<comment type="catalytic activity">
    <reaction evidence="3">
        <text>Hydrolysis of (1-&gt;4)-beta-linkages between N-acetylmuramic acid and N-acetyl-D-glucosamine residues in a peptidoglycan and between N-acetyl-D-glucosamine residues in chitodextrins.</text>
        <dbReference type="EC" id="3.2.1.17"/>
    </reaction>
</comment>
<comment type="subcellular location">
    <subcellularLocation>
        <location evidence="3">Host cell inner membrane</location>
        <topology evidence="3">Single-pass type II membrane protein</topology>
        <orientation evidence="3">Periplasmic side</orientation>
    </subcellularLocation>
    <text evidence="3">Secreted as a signal-anchored, membrane-tethered, inactive endolysin which is subsequently refolded, activated and released by membrane depolarization driven by the pinholin.</text>
</comment>
<comment type="domain">
    <text evidence="3">The signal-anchor, which may also be an uncleaved signal sequence tethers the SAR-endolysin to the membrane until the latter is depolarized by the holin, resulting in the escape of SAR-endolysin from the membrane.</text>
</comment>
<comment type="PTM">
    <text evidence="1">All the periplasmic cyteines of the inactive, membrane-associated endolysin are involved in disulfide bond (By similarity). In the active soluble form, disulfide bonds are isomerized and only the catalytic cysteine remains free (By similarity).</text>
</comment>
<comment type="similarity">
    <text evidence="3">Belongs to the glycosyl hydrolase 24 family.</text>
</comment>
<proteinExistence type="inferred from homology"/>
<organism>
    <name type="scientific">Haemophilus phage HP1 (strain HP1c1)</name>
    <name type="common">Bacteriophage HP1</name>
    <dbReference type="NCBI Taxonomy" id="1289570"/>
    <lineage>
        <taxon>Viruses</taxon>
        <taxon>Duplodnaviria</taxon>
        <taxon>Heunggongvirae</taxon>
        <taxon>Uroviricota</taxon>
        <taxon>Caudoviricetes</taxon>
        <taxon>Peduoviridae</taxon>
        <taxon>Hpunavirus</taxon>
        <taxon>Haemophilus phage HP1</taxon>
    </lineage>
</organism>
<protein>
    <recommendedName>
        <fullName evidence="3">SAR-endolysin</fullName>
        <ecNumber evidence="3">3.2.1.17</ecNumber>
    </recommendedName>
    <alternativeName>
        <fullName evidence="3">Endolysin</fullName>
    </alternativeName>
    <alternativeName>
        <fullName evidence="3">Lysis protein</fullName>
    </alternativeName>
    <alternativeName>
        <fullName evidence="3">Lysozyme</fullName>
    </alternativeName>
    <alternativeName>
        <fullName evidence="3">Muramidase</fullName>
    </alternativeName>
</protein>
<evidence type="ECO:0000250" key="1">
    <source>
        <dbReference type="UniProtKB" id="Q37875"/>
    </source>
</evidence>
<evidence type="ECO:0000255" key="2"/>
<evidence type="ECO:0000255" key="3">
    <source>
        <dbReference type="HAMAP-Rule" id="MF_04136"/>
    </source>
</evidence>
<reference key="1">
    <citation type="journal article" date="1984" name="Gene">
        <title>Nucleotide sequence of cloned DNA segments of the Haemophilus influenzae bacteriophage HP1c1.</title>
        <authorList>
            <person name="Benjamin R.C."/>
            <person name="Fitzmaurice W.P."/>
            <person name="Huang P.C."/>
            <person name="Scocca J.J."/>
        </authorList>
    </citation>
    <scope>NUCLEOTIDE SEQUENCE [GENOMIC DNA]</scope>
</reference>
<reference key="2">
    <citation type="journal article" date="1996" name="Nucleic Acids Res.">
        <title>The complete nucleotide sequence of bacteriophage HP1 DNA.</title>
        <authorList>
            <person name="Esposito D."/>
            <person name="Fitzmaurice W.P."/>
            <person name="Benjamin R.C."/>
            <person name="Goodman S.D."/>
            <person name="Waldman A.S."/>
            <person name="Scocca J.J."/>
        </authorList>
    </citation>
    <scope>NUCLEOTIDE SEQUENCE [LARGE SCALE GENOMIC DNA]</scope>
</reference>
<dbReference type="EC" id="3.2.1.17" evidence="3"/>
<dbReference type="EMBL" id="U24159">
    <property type="protein sequence ID" value="AAB09211.1"/>
    <property type="molecule type" value="Genomic_DNA"/>
</dbReference>
<dbReference type="PIR" id="S69532">
    <property type="entry name" value="S69532"/>
</dbReference>
<dbReference type="RefSeq" id="NP_043495.1">
    <property type="nucleotide sequence ID" value="NC_001697.1"/>
</dbReference>
<dbReference type="SMR" id="P51728"/>
<dbReference type="GeneID" id="1261120"/>
<dbReference type="KEGG" id="vg:1261120"/>
<dbReference type="Proteomes" id="UP000001713">
    <property type="component" value="Segment"/>
</dbReference>
<dbReference type="GO" id="GO:0020002">
    <property type="term" value="C:host cell plasma membrane"/>
    <property type="evidence" value="ECO:0007669"/>
    <property type="project" value="UniProtKB-SubCell"/>
</dbReference>
<dbReference type="GO" id="GO:0016020">
    <property type="term" value="C:membrane"/>
    <property type="evidence" value="ECO:0007669"/>
    <property type="project" value="UniProtKB-KW"/>
</dbReference>
<dbReference type="GO" id="GO:0003796">
    <property type="term" value="F:lysozyme activity"/>
    <property type="evidence" value="ECO:0007669"/>
    <property type="project" value="UniProtKB-EC"/>
</dbReference>
<dbReference type="GO" id="GO:0016998">
    <property type="term" value="P:cell wall macromolecule catabolic process"/>
    <property type="evidence" value="ECO:0007669"/>
    <property type="project" value="InterPro"/>
</dbReference>
<dbReference type="GO" id="GO:0042742">
    <property type="term" value="P:defense response to bacterium"/>
    <property type="evidence" value="ECO:0007669"/>
    <property type="project" value="UniProtKB-KW"/>
</dbReference>
<dbReference type="GO" id="GO:0031640">
    <property type="term" value="P:killing of cells of another organism"/>
    <property type="evidence" value="ECO:0007669"/>
    <property type="project" value="UniProtKB-KW"/>
</dbReference>
<dbReference type="GO" id="GO:0009253">
    <property type="term" value="P:peptidoglycan catabolic process"/>
    <property type="evidence" value="ECO:0007669"/>
    <property type="project" value="InterPro"/>
</dbReference>
<dbReference type="CDD" id="cd16901">
    <property type="entry name" value="lyz_P1"/>
    <property type="match status" value="1"/>
</dbReference>
<dbReference type="Gene3D" id="1.10.530.40">
    <property type="match status" value="1"/>
</dbReference>
<dbReference type="HAMAP" id="MF_04110">
    <property type="entry name" value="ENDOLYSIN_T4"/>
    <property type="match status" value="1"/>
</dbReference>
<dbReference type="HAMAP" id="MF_04136">
    <property type="entry name" value="SAR_ENDOLYSIN"/>
    <property type="match status" value="1"/>
</dbReference>
<dbReference type="InterPro" id="IPR051018">
    <property type="entry name" value="Bacteriophage_GH24"/>
</dbReference>
<dbReference type="InterPro" id="IPR034690">
    <property type="entry name" value="Endolysin_T4_type"/>
</dbReference>
<dbReference type="InterPro" id="IPR002196">
    <property type="entry name" value="Glyco_hydro_24"/>
</dbReference>
<dbReference type="InterPro" id="IPR023346">
    <property type="entry name" value="Lysozyme-like_dom_sf"/>
</dbReference>
<dbReference type="InterPro" id="IPR023347">
    <property type="entry name" value="Lysozyme_dom_sf"/>
</dbReference>
<dbReference type="InterPro" id="IPR043688">
    <property type="entry name" value="SAR_endolysin-like"/>
</dbReference>
<dbReference type="PANTHER" id="PTHR38107">
    <property type="match status" value="1"/>
</dbReference>
<dbReference type="PANTHER" id="PTHR38107:SF4">
    <property type="entry name" value="LYSOZYME"/>
    <property type="match status" value="1"/>
</dbReference>
<dbReference type="Pfam" id="PF00959">
    <property type="entry name" value="Phage_lysozyme"/>
    <property type="match status" value="1"/>
</dbReference>
<dbReference type="SUPFAM" id="SSF53955">
    <property type="entry name" value="Lysozyme-like"/>
    <property type="match status" value="1"/>
</dbReference>
<gene>
    <name type="primary">lys</name>
</gene>
<organismHost>
    <name type="scientific">Haemophilus influenzae</name>
    <dbReference type="NCBI Taxonomy" id="727"/>
</organismHost>
<name>ENLYS_BPHC1</name>